<comment type="induction">
    <text evidence="2">Transcriptionally regulated by the forespore-specific sigma factor, SigG, and the general stress response regulator, SigB.</text>
</comment>
<organism>
    <name type="scientific">Bacillus subtilis (strain 168)</name>
    <dbReference type="NCBI Taxonomy" id="224308"/>
    <lineage>
        <taxon>Bacteria</taxon>
        <taxon>Bacillati</taxon>
        <taxon>Bacillota</taxon>
        <taxon>Bacilli</taxon>
        <taxon>Bacillales</taxon>
        <taxon>Bacillaceae</taxon>
        <taxon>Bacillus</taxon>
    </lineage>
</organism>
<name>YFKD_BACSU</name>
<accession>O34579</accession>
<accession>Q79EY3</accession>
<keyword id="KW-1185">Reference proteome</keyword>
<keyword id="KW-0732">Signal</keyword>
<evidence type="ECO:0000255" key="1"/>
<evidence type="ECO:0000269" key="2">
    <source>
    </source>
</evidence>
<sequence>MMKKLFHSTLIVLLFFSFFGVQPIHAKKQFKVPNSVASISKENTYPNASQDQPMLQPSKLAKELLDHSEVKIENPHLIKMLNESNISGTPLAVGYRATIFLGKWALGYESNETVANWEYKKINTNRADNRGGKETAEMHYAQEQQYRVKGGLTAKVPNAEDVKSMMMQKAMKKTNLPLAFETVIGAGTKRDQIYKVAPKKIGYLHAYAPAVNEKGKVTYGEVYLVLKGNKRKLVVKNVTSQGIGAWIPVQDHVTFGFQLSSLPR</sequence>
<reference key="1">
    <citation type="journal article" date="1996" name="Microbiology">
        <title>Cloning and sequencing of a 40.6 kb segment in the 73 degrees-76 degrees region of the Bacillus subtilis chromosome containing genes for trehalose metabolism and acetoin utilization.</title>
        <authorList>
            <person name="Yamamoto H."/>
            <person name="Uchiyama S."/>
            <person name="Sekiguchi J."/>
        </authorList>
    </citation>
    <scope>NUCLEOTIDE SEQUENCE [GENOMIC DNA]</scope>
    <source>
        <strain>168 / AC327</strain>
    </source>
</reference>
<reference key="2">
    <citation type="journal article" date="1997" name="Nature">
        <title>The complete genome sequence of the Gram-positive bacterium Bacillus subtilis.</title>
        <authorList>
            <person name="Kunst F."/>
            <person name="Ogasawara N."/>
            <person name="Moszer I."/>
            <person name="Albertini A.M."/>
            <person name="Alloni G."/>
            <person name="Azevedo V."/>
            <person name="Bertero M.G."/>
            <person name="Bessieres P."/>
            <person name="Bolotin A."/>
            <person name="Borchert S."/>
            <person name="Borriss R."/>
            <person name="Boursier L."/>
            <person name="Brans A."/>
            <person name="Braun M."/>
            <person name="Brignell S.C."/>
            <person name="Bron S."/>
            <person name="Brouillet S."/>
            <person name="Bruschi C.V."/>
            <person name="Caldwell B."/>
            <person name="Capuano V."/>
            <person name="Carter N.M."/>
            <person name="Choi S.-K."/>
            <person name="Codani J.-J."/>
            <person name="Connerton I.F."/>
            <person name="Cummings N.J."/>
            <person name="Daniel R.A."/>
            <person name="Denizot F."/>
            <person name="Devine K.M."/>
            <person name="Duesterhoeft A."/>
            <person name="Ehrlich S.D."/>
            <person name="Emmerson P.T."/>
            <person name="Entian K.-D."/>
            <person name="Errington J."/>
            <person name="Fabret C."/>
            <person name="Ferrari E."/>
            <person name="Foulger D."/>
            <person name="Fritz C."/>
            <person name="Fujita M."/>
            <person name="Fujita Y."/>
            <person name="Fuma S."/>
            <person name="Galizzi A."/>
            <person name="Galleron N."/>
            <person name="Ghim S.-Y."/>
            <person name="Glaser P."/>
            <person name="Goffeau A."/>
            <person name="Golightly E.J."/>
            <person name="Grandi G."/>
            <person name="Guiseppi G."/>
            <person name="Guy B.J."/>
            <person name="Haga K."/>
            <person name="Haiech J."/>
            <person name="Harwood C.R."/>
            <person name="Henaut A."/>
            <person name="Hilbert H."/>
            <person name="Holsappel S."/>
            <person name="Hosono S."/>
            <person name="Hullo M.-F."/>
            <person name="Itaya M."/>
            <person name="Jones L.-M."/>
            <person name="Joris B."/>
            <person name="Karamata D."/>
            <person name="Kasahara Y."/>
            <person name="Klaerr-Blanchard M."/>
            <person name="Klein C."/>
            <person name="Kobayashi Y."/>
            <person name="Koetter P."/>
            <person name="Koningstein G."/>
            <person name="Krogh S."/>
            <person name="Kumano M."/>
            <person name="Kurita K."/>
            <person name="Lapidus A."/>
            <person name="Lardinois S."/>
            <person name="Lauber J."/>
            <person name="Lazarevic V."/>
            <person name="Lee S.-M."/>
            <person name="Levine A."/>
            <person name="Liu H."/>
            <person name="Masuda S."/>
            <person name="Mauel C."/>
            <person name="Medigue C."/>
            <person name="Medina N."/>
            <person name="Mellado R.P."/>
            <person name="Mizuno M."/>
            <person name="Moestl D."/>
            <person name="Nakai S."/>
            <person name="Noback M."/>
            <person name="Noone D."/>
            <person name="O'Reilly M."/>
            <person name="Ogawa K."/>
            <person name="Ogiwara A."/>
            <person name="Oudega B."/>
            <person name="Park S.-H."/>
            <person name="Parro V."/>
            <person name="Pohl T.M."/>
            <person name="Portetelle D."/>
            <person name="Porwollik S."/>
            <person name="Prescott A.M."/>
            <person name="Presecan E."/>
            <person name="Pujic P."/>
            <person name="Purnelle B."/>
            <person name="Rapoport G."/>
            <person name="Rey M."/>
            <person name="Reynolds S."/>
            <person name="Rieger M."/>
            <person name="Rivolta C."/>
            <person name="Rocha E."/>
            <person name="Roche B."/>
            <person name="Rose M."/>
            <person name="Sadaie Y."/>
            <person name="Sato T."/>
            <person name="Scanlan E."/>
            <person name="Schleich S."/>
            <person name="Schroeter R."/>
            <person name="Scoffone F."/>
            <person name="Sekiguchi J."/>
            <person name="Sekowska A."/>
            <person name="Seror S.J."/>
            <person name="Serror P."/>
            <person name="Shin B.-S."/>
            <person name="Soldo B."/>
            <person name="Sorokin A."/>
            <person name="Tacconi E."/>
            <person name="Takagi T."/>
            <person name="Takahashi H."/>
            <person name="Takemaru K."/>
            <person name="Takeuchi M."/>
            <person name="Tamakoshi A."/>
            <person name="Tanaka T."/>
            <person name="Terpstra P."/>
            <person name="Tognoni A."/>
            <person name="Tosato V."/>
            <person name="Uchiyama S."/>
            <person name="Vandenbol M."/>
            <person name="Vannier F."/>
            <person name="Vassarotti A."/>
            <person name="Viari A."/>
            <person name="Wambutt R."/>
            <person name="Wedler E."/>
            <person name="Wedler H."/>
            <person name="Weitzenegger T."/>
            <person name="Winters P."/>
            <person name="Wipat A."/>
            <person name="Yamamoto H."/>
            <person name="Yamane K."/>
            <person name="Yasumoto K."/>
            <person name="Yata K."/>
            <person name="Yoshida K."/>
            <person name="Yoshikawa H.-F."/>
            <person name="Zumstein E."/>
            <person name="Yoshikawa H."/>
            <person name="Danchin A."/>
        </authorList>
    </citation>
    <scope>NUCLEOTIDE SEQUENCE [LARGE SCALE GENOMIC DNA]</scope>
    <source>
        <strain>168</strain>
    </source>
</reference>
<reference key="3">
    <citation type="journal article" date="2009" name="Arch. Microbiol.">
        <title>Characterization of Bacillus subtilis YfkE (ChaA): a calcium-specific Ca2+/H+ antiporter of the CaCA family.</title>
        <authorList>
            <person name="Fujisawa M."/>
            <person name="Wada Y."/>
            <person name="Tsuchiya T."/>
            <person name="Ito M."/>
        </authorList>
    </citation>
    <scope>INDUCTION</scope>
    <source>
        <strain>168</strain>
    </source>
</reference>
<gene>
    <name type="primary">yfkD</name>
    <name type="ordered locus">BSU07930</name>
</gene>
<protein>
    <recommendedName>
        <fullName>Uncharacterized protein YfkD</fullName>
    </recommendedName>
</protein>
<feature type="signal peptide" evidence="1">
    <location>
        <begin position="1"/>
        <end position="26"/>
    </location>
</feature>
<feature type="chain" id="PRO_0000379096" description="Uncharacterized protein YfkD">
    <location>
        <begin position="27"/>
        <end position="264"/>
    </location>
</feature>
<dbReference type="EMBL" id="D83967">
    <property type="protein sequence ID" value="BAA23394.1"/>
    <property type="molecule type" value="Genomic_DNA"/>
</dbReference>
<dbReference type="EMBL" id="AL009126">
    <property type="protein sequence ID" value="CAB12622.1"/>
    <property type="molecule type" value="Genomic_DNA"/>
</dbReference>
<dbReference type="PIR" id="H69807">
    <property type="entry name" value="H69807"/>
</dbReference>
<dbReference type="RefSeq" id="NP_388674.1">
    <property type="nucleotide sequence ID" value="NC_000964.3"/>
</dbReference>
<dbReference type="RefSeq" id="WP_003233657.1">
    <property type="nucleotide sequence ID" value="NZ_OZ025638.1"/>
</dbReference>
<dbReference type="FunCoup" id="O34579">
    <property type="interactions" value="105"/>
</dbReference>
<dbReference type="STRING" id="224308.BSU07930"/>
<dbReference type="PaxDb" id="224308-BSU07930"/>
<dbReference type="DNASU" id="936138"/>
<dbReference type="EnsemblBacteria" id="CAB12622">
    <property type="protein sequence ID" value="CAB12622"/>
    <property type="gene ID" value="BSU_07930"/>
</dbReference>
<dbReference type="GeneID" id="936138"/>
<dbReference type="KEGG" id="bsu:BSU07930"/>
<dbReference type="PATRIC" id="fig|224308.43.peg.833"/>
<dbReference type="eggNOG" id="ENOG502Z8NK">
    <property type="taxonomic scope" value="Bacteria"/>
</dbReference>
<dbReference type="InParanoid" id="O34579"/>
<dbReference type="OrthoDB" id="2690238at2"/>
<dbReference type="BioCyc" id="BSUB:BSU07930-MONOMER"/>
<dbReference type="Proteomes" id="UP000001570">
    <property type="component" value="Chromosome"/>
</dbReference>
<dbReference type="InterPro" id="IPR025548">
    <property type="entry name" value="YfkD"/>
</dbReference>
<dbReference type="Pfam" id="PF14167">
    <property type="entry name" value="YfkD"/>
    <property type="match status" value="1"/>
</dbReference>
<proteinExistence type="evidence at transcript level"/>